<accession>Q5AS60</accession>
<accession>C8V9A5</accession>
<comment type="subunit">
    <text evidence="1">Component of the small ribosomal subunit. Mature ribosomes consist of a small (40S) and a large (60S) subunit. The 40S subunit contains about 33 different proteins and 1 molecule of RNA (18S). The 60S subunit contains about 49 different proteins and 3 molecules of RNA (25S, 5.8S and 5S).</text>
</comment>
<comment type="subcellular location">
    <subcellularLocation>
        <location evidence="1">Cytoplasm</location>
    </subcellularLocation>
</comment>
<comment type="similarity">
    <text evidence="1">Belongs to the eukaryotic ribosomal protein eS1 family.</text>
</comment>
<feature type="initiator methionine" description="Removed" evidence="1">
    <location>
        <position position="1"/>
    </location>
</feature>
<feature type="chain" id="PRO_0000389376" description="Small ribosomal subunit protein eS1">
    <location>
        <begin position="2"/>
        <end position="256"/>
    </location>
</feature>
<feature type="region of interest" description="Disordered" evidence="2">
    <location>
        <begin position="1"/>
        <end position="20"/>
    </location>
</feature>
<feature type="compositionally biased region" description="Basic residues" evidence="2">
    <location>
        <begin position="1"/>
        <end position="18"/>
    </location>
</feature>
<feature type="modified residue" description="N-acetylalanine; partial" evidence="1">
    <location>
        <position position="2"/>
    </location>
</feature>
<name>RS3A_EMENI</name>
<sequence>MAVGKNKRLSKGKKGIKKRTVDPFTRKDEYSVKAPSTFANRDVGKTLVNRTSGLKNANDSLKGRIFEVSLADLQGDEDHAFRKVKLRVDEIQGKNCLTNFHGLDFTTDKLRSLVRKWQSLIEANVTVKTTDDYLLRLFAIAFTKRRPNQIKKTTYARSSQIRAIRKKMTEIMQREASSCSLAQLTSKLIPEVIGREIEKATQGIYPLQHVHIRKVKLLKSPKFDLGALLNLHGESTTDDKGQKVEREFKEQVLESV</sequence>
<evidence type="ECO:0000255" key="1">
    <source>
        <dbReference type="HAMAP-Rule" id="MF_03122"/>
    </source>
</evidence>
<evidence type="ECO:0000256" key="2">
    <source>
        <dbReference type="SAM" id="MobiDB-lite"/>
    </source>
</evidence>
<evidence type="ECO:0000305" key="3"/>
<keyword id="KW-0007">Acetylation</keyword>
<keyword id="KW-0963">Cytoplasm</keyword>
<keyword id="KW-1185">Reference proteome</keyword>
<keyword id="KW-0687">Ribonucleoprotein</keyword>
<keyword id="KW-0689">Ribosomal protein</keyword>
<organism>
    <name type="scientific">Emericella nidulans (strain FGSC A4 / ATCC 38163 / CBS 112.46 / NRRL 194 / M139)</name>
    <name type="common">Aspergillus nidulans</name>
    <dbReference type="NCBI Taxonomy" id="227321"/>
    <lineage>
        <taxon>Eukaryota</taxon>
        <taxon>Fungi</taxon>
        <taxon>Dikarya</taxon>
        <taxon>Ascomycota</taxon>
        <taxon>Pezizomycotina</taxon>
        <taxon>Eurotiomycetes</taxon>
        <taxon>Eurotiomycetidae</taxon>
        <taxon>Eurotiales</taxon>
        <taxon>Aspergillaceae</taxon>
        <taxon>Aspergillus</taxon>
        <taxon>Aspergillus subgen. Nidulantes</taxon>
    </lineage>
</organism>
<gene>
    <name type="primary">rps1</name>
    <name type="ORF">AN8870</name>
</gene>
<dbReference type="EMBL" id="AACD01000163">
    <property type="protein sequence ID" value="EAA60158.1"/>
    <property type="molecule type" value="Genomic_DNA"/>
</dbReference>
<dbReference type="EMBL" id="BN001303">
    <property type="protein sequence ID" value="CBF77833.1"/>
    <property type="molecule type" value="Genomic_DNA"/>
</dbReference>
<dbReference type="RefSeq" id="XP_682139.1">
    <property type="nucleotide sequence ID" value="XM_677047.1"/>
</dbReference>
<dbReference type="SMR" id="Q5AS60"/>
<dbReference type="FunCoup" id="Q5AS60">
    <property type="interactions" value="1304"/>
</dbReference>
<dbReference type="STRING" id="227321.Q5AS60"/>
<dbReference type="EnsemblFungi" id="CBF77833">
    <property type="protein sequence ID" value="CBF77833"/>
    <property type="gene ID" value="ANIA_08870"/>
</dbReference>
<dbReference type="KEGG" id="ani:ANIA_08870"/>
<dbReference type="VEuPathDB" id="FungiDB:AN8870"/>
<dbReference type="eggNOG" id="KOG1628">
    <property type="taxonomic scope" value="Eukaryota"/>
</dbReference>
<dbReference type="HOGENOM" id="CLU_062507_0_0_1"/>
<dbReference type="InParanoid" id="Q5AS60"/>
<dbReference type="OMA" id="TRFKGHE"/>
<dbReference type="OrthoDB" id="9834376at2759"/>
<dbReference type="Proteomes" id="UP000000560">
    <property type="component" value="Chromosome III"/>
</dbReference>
<dbReference type="GO" id="GO:0005829">
    <property type="term" value="C:cytosol"/>
    <property type="evidence" value="ECO:0000318"/>
    <property type="project" value="GO_Central"/>
</dbReference>
<dbReference type="GO" id="GO:0022627">
    <property type="term" value="C:cytosolic small ribosomal subunit"/>
    <property type="evidence" value="ECO:0007669"/>
    <property type="project" value="UniProtKB-UniRule"/>
</dbReference>
<dbReference type="GO" id="GO:0005576">
    <property type="term" value="C:extracellular region"/>
    <property type="evidence" value="ECO:0000314"/>
    <property type="project" value="AspGD"/>
</dbReference>
<dbReference type="GO" id="GO:0003735">
    <property type="term" value="F:structural constituent of ribosome"/>
    <property type="evidence" value="ECO:0007669"/>
    <property type="project" value="UniProtKB-UniRule"/>
</dbReference>
<dbReference type="GO" id="GO:0006412">
    <property type="term" value="P:translation"/>
    <property type="evidence" value="ECO:0007669"/>
    <property type="project" value="UniProtKB-UniRule"/>
</dbReference>
<dbReference type="HAMAP" id="MF_03122">
    <property type="entry name" value="Ribosomal_eS1_euk"/>
    <property type="match status" value="1"/>
</dbReference>
<dbReference type="InterPro" id="IPR001593">
    <property type="entry name" value="Ribosomal_eS1"/>
</dbReference>
<dbReference type="InterPro" id="IPR018281">
    <property type="entry name" value="Ribosomal_eS1_CS"/>
</dbReference>
<dbReference type="InterPro" id="IPR027500">
    <property type="entry name" value="Ribosomal_eS1_euk"/>
</dbReference>
<dbReference type="PANTHER" id="PTHR11830">
    <property type="entry name" value="40S RIBOSOMAL PROTEIN S3A"/>
    <property type="match status" value="1"/>
</dbReference>
<dbReference type="Pfam" id="PF01015">
    <property type="entry name" value="Ribosomal_S3Ae"/>
    <property type="match status" value="1"/>
</dbReference>
<dbReference type="SMART" id="SM01397">
    <property type="entry name" value="Ribosomal_S3Ae"/>
    <property type="match status" value="1"/>
</dbReference>
<dbReference type="PROSITE" id="PS01191">
    <property type="entry name" value="RIBOSOMAL_S3AE"/>
    <property type="match status" value="1"/>
</dbReference>
<reference key="1">
    <citation type="journal article" date="2005" name="Nature">
        <title>Sequencing of Aspergillus nidulans and comparative analysis with A. fumigatus and A. oryzae.</title>
        <authorList>
            <person name="Galagan J.E."/>
            <person name="Calvo S.E."/>
            <person name="Cuomo C."/>
            <person name="Ma L.-J."/>
            <person name="Wortman J.R."/>
            <person name="Batzoglou S."/>
            <person name="Lee S.-I."/>
            <person name="Bastuerkmen M."/>
            <person name="Spevak C.C."/>
            <person name="Clutterbuck J."/>
            <person name="Kapitonov V."/>
            <person name="Jurka J."/>
            <person name="Scazzocchio C."/>
            <person name="Farman M.L."/>
            <person name="Butler J."/>
            <person name="Purcell S."/>
            <person name="Harris S."/>
            <person name="Braus G.H."/>
            <person name="Draht O."/>
            <person name="Busch S."/>
            <person name="D'Enfert C."/>
            <person name="Bouchier C."/>
            <person name="Goldman G.H."/>
            <person name="Bell-Pedersen D."/>
            <person name="Griffiths-Jones S."/>
            <person name="Doonan J.H."/>
            <person name="Yu J."/>
            <person name="Vienken K."/>
            <person name="Pain A."/>
            <person name="Freitag M."/>
            <person name="Selker E.U."/>
            <person name="Archer D.B."/>
            <person name="Penalva M.A."/>
            <person name="Oakley B.R."/>
            <person name="Momany M."/>
            <person name="Tanaka T."/>
            <person name="Kumagai T."/>
            <person name="Asai K."/>
            <person name="Machida M."/>
            <person name="Nierman W.C."/>
            <person name="Denning D.W."/>
            <person name="Caddick M.X."/>
            <person name="Hynes M."/>
            <person name="Paoletti M."/>
            <person name="Fischer R."/>
            <person name="Miller B.L."/>
            <person name="Dyer P.S."/>
            <person name="Sachs M.S."/>
            <person name="Osmani S.A."/>
            <person name="Birren B.W."/>
        </authorList>
    </citation>
    <scope>NUCLEOTIDE SEQUENCE [LARGE SCALE GENOMIC DNA]</scope>
    <source>
        <strain>FGSC A4 / ATCC 38163 / CBS 112.46 / NRRL 194 / M139</strain>
    </source>
</reference>
<reference key="2">
    <citation type="journal article" date="2009" name="Fungal Genet. Biol.">
        <title>The 2008 update of the Aspergillus nidulans genome annotation: a community effort.</title>
        <authorList>
            <person name="Wortman J.R."/>
            <person name="Gilsenan J.M."/>
            <person name="Joardar V."/>
            <person name="Deegan J."/>
            <person name="Clutterbuck J."/>
            <person name="Andersen M.R."/>
            <person name="Archer D."/>
            <person name="Bencina M."/>
            <person name="Braus G."/>
            <person name="Coutinho P."/>
            <person name="von Dohren H."/>
            <person name="Doonan J."/>
            <person name="Driessen A.J."/>
            <person name="Durek P."/>
            <person name="Espeso E."/>
            <person name="Fekete E."/>
            <person name="Flipphi M."/>
            <person name="Estrada C.G."/>
            <person name="Geysens S."/>
            <person name="Goldman G."/>
            <person name="de Groot P.W."/>
            <person name="Hansen K."/>
            <person name="Harris S.D."/>
            <person name="Heinekamp T."/>
            <person name="Helmstaedt K."/>
            <person name="Henrissat B."/>
            <person name="Hofmann G."/>
            <person name="Homan T."/>
            <person name="Horio T."/>
            <person name="Horiuchi H."/>
            <person name="James S."/>
            <person name="Jones M."/>
            <person name="Karaffa L."/>
            <person name="Karanyi Z."/>
            <person name="Kato M."/>
            <person name="Keller N."/>
            <person name="Kelly D.E."/>
            <person name="Kiel J.A."/>
            <person name="Kim J.M."/>
            <person name="van der Klei I.J."/>
            <person name="Klis F.M."/>
            <person name="Kovalchuk A."/>
            <person name="Krasevec N."/>
            <person name="Kubicek C.P."/>
            <person name="Liu B."/>
            <person name="Maccabe A."/>
            <person name="Meyer V."/>
            <person name="Mirabito P."/>
            <person name="Miskei M."/>
            <person name="Mos M."/>
            <person name="Mullins J."/>
            <person name="Nelson D.R."/>
            <person name="Nielsen J."/>
            <person name="Oakley B.R."/>
            <person name="Osmani S.A."/>
            <person name="Pakula T."/>
            <person name="Paszewski A."/>
            <person name="Paulsen I."/>
            <person name="Pilsyk S."/>
            <person name="Pocsi I."/>
            <person name="Punt P.J."/>
            <person name="Ram A.F."/>
            <person name="Ren Q."/>
            <person name="Robellet X."/>
            <person name="Robson G."/>
            <person name="Seiboth B."/>
            <person name="van Solingen P."/>
            <person name="Specht T."/>
            <person name="Sun J."/>
            <person name="Taheri-Talesh N."/>
            <person name="Takeshita N."/>
            <person name="Ussery D."/>
            <person name="vanKuyk P.A."/>
            <person name="Visser H."/>
            <person name="van de Vondervoort P.J."/>
            <person name="de Vries R.P."/>
            <person name="Walton J."/>
            <person name="Xiang X."/>
            <person name="Xiong Y."/>
            <person name="Zeng A.P."/>
            <person name="Brandt B.W."/>
            <person name="Cornell M.J."/>
            <person name="van den Hondel C.A."/>
            <person name="Visser J."/>
            <person name="Oliver S.G."/>
            <person name="Turner G."/>
        </authorList>
    </citation>
    <scope>GENOME REANNOTATION</scope>
    <source>
        <strain>FGSC A4 / ATCC 38163 / CBS 112.46 / NRRL 194 / M139</strain>
    </source>
</reference>
<proteinExistence type="inferred from homology"/>
<protein>
    <recommendedName>
        <fullName evidence="1">Small ribosomal subunit protein eS1</fullName>
    </recommendedName>
    <alternativeName>
        <fullName evidence="3">40S ribosomal protein S1</fullName>
    </alternativeName>
</protein>